<dbReference type="EC" id="2.1.3.2" evidence="1"/>
<dbReference type="EMBL" id="CP000094">
    <property type="protein sequence ID" value="ABA77051.1"/>
    <property type="molecule type" value="Genomic_DNA"/>
</dbReference>
<dbReference type="RefSeq" id="WP_007913665.1">
    <property type="nucleotide sequence ID" value="NC_007492.2"/>
</dbReference>
<dbReference type="SMR" id="Q3K5A3"/>
<dbReference type="KEGG" id="pfo:Pfl01_5314"/>
<dbReference type="eggNOG" id="COG0540">
    <property type="taxonomic scope" value="Bacteria"/>
</dbReference>
<dbReference type="HOGENOM" id="CLU_043846_2_0_6"/>
<dbReference type="UniPathway" id="UPA00070">
    <property type="reaction ID" value="UER00116"/>
</dbReference>
<dbReference type="Proteomes" id="UP000002704">
    <property type="component" value="Chromosome"/>
</dbReference>
<dbReference type="GO" id="GO:0005829">
    <property type="term" value="C:cytosol"/>
    <property type="evidence" value="ECO:0007669"/>
    <property type="project" value="TreeGrafter"/>
</dbReference>
<dbReference type="GO" id="GO:0016597">
    <property type="term" value="F:amino acid binding"/>
    <property type="evidence" value="ECO:0007669"/>
    <property type="project" value="InterPro"/>
</dbReference>
<dbReference type="GO" id="GO:0004070">
    <property type="term" value="F:aspartate carbamoyltransferase activity"/>
    <property type="evidence" value="ECO:0007669"/>
    <property type="project" value="UniProtKB-UniRule"/>
</dbReference>
<dbReference type="GO" id="GO:0006207">
    <property type="term" value="P:'de novo' pyrimidine nucleobase biosynthetic process"/>
    <property type="evidence" value="ECO:0007669"/>
    <property type="project" value="InterPro"/>
</dbReference>
<dbReference type="GO" id="GO:0044205">
    <property type="term" value="P:'de novo' UMP biosynthetic process"/>
    <property type="evidence" value="ECO:0007669"/>
    <property type="project" value="UniProtKB-UniRule"/>
</dbReference>
<dbReference type="GO" id="GO:0006520">
    <property type="term" value="P:amino acid metabolic process"/>
    <property type="evidence" value="ECO:0007669"/>
    <property type="project" value="InterPro"/>
</dbReference>
<dbReference type="FunFam" id="3.40.50.1370:FF:000006">
    <property type="entry name" value="Aspartate carbamoyltransferase"/>
    <property type="match status" value="1"/>
</dbReference>
<dbReference type="Gene3D" id="3.40.50.1370">
    <property type="entry name" value="Aspartate/ornithine carbamoyltransferase"/>
    <property type="match status" value="2"/>
</dbReference>
<dbReference type="HAMAP" id="MF_00001">
    <property type="entry name" value="Asp_carb_tr"/>
    <property type="match status" value="1"/>
</dbReference>
<dbReference type="InterPro" id="IPR006132">
    <property type="entry name" value="Asp/Orn_carbamoyltranf_P-bd"/>
</dbReference>
<dbReference type="InterPro" id="IPR006130">
    <property type="entry name" value="Asp/Orn_carbamoylTrfase"/>
</dbReference>
<dbReference type="InterPro" id="IPR036901">
    <property type="entry name" value="Asp/Orn_carbamoylTrfase_sf"/>
</dbReference>
<dbReference type="InterPro" id="IPR002082">
    <property type="entry name" value="Asp_carbamoyltransf"/>
</dbReference>
<dbReference type="InterPro" id="IPR006131">
    <property type="entry name" value="Asp_carbamoyltransf_Asp/Orn-bd"/>
</dbReference>
<dbReference type="NCBIfam" id="TIGR00670">
    <property type="entry name" value="asp_carb_tr"/>
    <property type="match status" value="1"/>
</dbReference>
<dbReference type="NCBIfam" id="NF002032">
    <property type="entry name" value="PRK00856.1"/>
    <property type="match status" value="1"/>
</dbReference>
<dbReference type="PANTHER" id="PTHR45753:SF6">
    <property type="entry name" value="ASPARTATE CARBAMOYLTRANSFERASE"/>
    <property type="match status" value="1"/>
</dbReference>
<dbReference type="PANTHER" id="PTHR45753">
    <property type="entry name" value="ORNITHINE CARBAMOYLTRANSFERASE, MITOCHONDRIAL"/>
    <property type="match status" value="1"/>
</dbReference>
<dbReference type="Pfam" id="PF00185">
    <property type="entry name" value="OTCace"/>
    <property type="match status" value="1"/>
</dbReference>
<dbReference type="Pfam" id="PF02729">
    <property type="entry name" value="OTCace_N"/>
    <property type="match status" value="1"/>
</dbReference>
<dbReference type="PRINTS" id="PR00100">
    <property type="entry name" value="AOTCASE"/>
</dbReference>
<dbReference type="PRINTS" id="PR00101">
    <property type="entry name" value="ATCASE"/>
</dbReference>
<dbReference type="SUPFAM" id="SSF53671">
    <property type="entry name" value="Aspartate/ornithine carbamoyltransferase"/>
    <property type="match status" value="1"/>
</dbReference>
<dbReference type="PROSITE" id="PS00097">
    <property type="entry name" value="CARBAMOYLTRANSFERASE"/>
    <property type="match status" value="1"/>
</dbReference>
<gene>
    <name evidence="1" type="primary">pyrB</name>
    <name type="ordered locus">Pfl01_5314</name>
</gene>
<name>PYRB_PSEPF</name>
<protein>
    <recommendedName>
        <fullName evidence="1">Aspartate carbamoyltransferase catalytic subunit</fullName>
        <ecNumber evidence="1">2.1.3.2</ecNumber>
    </recommendedName>
    <alternativeName>
        <fullName evidence="1">Aspartate transcarbamylase</fullName>
        <shortName evidence="1">ATCase</shortName>
    </alternativeName>
</protein>
<evidence type="ECO:0000255" key="1">
    <source>
        <dbReference type="HAMAP-Rule" id="MF_00001"/>
    </source>
</evidence>
<organism>
    <name type="scientific">Pseudomonas fluorescens (strain Pf0-1)</name>
    <dbReference type="NCBI Taxonomy" id="205922"/>
    <lineage>
        <taxon>Bacteria</taxon>
        <taxon>Pseudomonadati</taxon>
        <taxon>Pseudomonadota</taxon>
        <taxon>Gammaproteobacteria</taxon>
        <taxon>Pseudomonadales</taxon>
        <taxon>Pseudomonadaceae</taxon>
        <taxon>Pseudomonas</taxon>
    </lineage>
</organism>
<sequence>MTPLDTKRPLQLNDQGQLRHFLSLDGLRRELLTEILDTADSFLEVGARAVKKVPLLRGKTVCNVFFENSTRTRTTFELAAQRLSADVITLNVSTSSASKGETLLDTLRNLEAMAADMFVVRHGDSGAAHFIAEHVCPQVAIINGGDGRHAHPTQGMLDMLTIRRHKGGFENLSVAIVGDILHSRVARSNMLALKTLGCPDIRVIAPKTLLPIGIEQYGVKVYTDMTEGLKDVDVVIMLRLQRERMTGGLLPSEGEFYRLFGLTTARLAGAKPDCIVMHPGPINRGVEIESAVADGPHSVILNQVTYGIAIRMAVLSMAMSGQTAQRQFEQENAQ</sequence>
<accession>Q3K5A3</accession>
<proteinExistence type="inferred from homology"/>
<feature type="chain" id="PRO_0000321139" description="Aspartate carbamoyltransferase catalytic subunit">
    <location>
        <begin position="1"/>
        <end position="334"/>
    </location>
</feature>
<feature type="binding site" evidence="1">
    <location>
        <position position="71"/>
    </location>
    <ligand>
        <name>carbamoyl phosphate</name>
        <dbReference type="ChEBI" id="CHEBI:58228"/>
    </ligand>
</feature>
<feature type="binding site" evidence="1">
    <location>
        <position position="72"/>
    </location>
    <ligand>
        <name>carbamoyl phosphate</name>
        <dbReference type="ChEBI" id="CHEBI:58228"/>
    </ligand>
</feature>
<feature type="binding site" evidence="1">
    <location>
        <position position="99"/>
    </location>
    <ligand>
        <name>L-aspartate</name>
        <dbReference type="ChEBI" id="CHEBI:29991"/>
    </ligand>
</feature>
<feature type="binding site" evidence="1">
    <location>
        <position position="121"/>
    </location>
    <ligand>
        <name>carbamoyl phosphate</name>
        <dbReference type="ChEBI" id="CHEBI:58228"/>
    </ligand>
</feature>
<feature type="binding site" evidence="1">
    <location>
        <position position="151"/>
    </location>
    <ligand>
        <name>carbamoyl phosphate</name>
        <dbReference type="ChEBI" id="CHEBI:58228"/>
    </ligand>
</feature>
<feature type="binding site" evidence="1">
    <location>
        <position position="154"/>
    </location>
    <ligand>
        <name>carbamoyl phosphate</name>
        <dbReference type="ChEBI" id="CHEBI:58228"/>
    </ligand>
</feature>
<feature type="binding site" evidence="1">
    <location>
        <position position="184"/>
    </location>
    <ligand>
        <name>L-aspartate</name>
        <dbReference type="ChEBI" id="CHEBI:29991"/>
    </ligand>
</feature>
<feature type="binding site" evidence="1">
    <location>
        <position position="239"/>
    </location>
    <ligand>
        <name>L-aspartate</name>
        <dbReference type="ChEBI" id="CHEBI:29991"/>
    </ligand>
</feature>
<feature type="binding site" evidence="1">
    <location>
        <position position="280"/>
    </location>
    <ligand>
        <name>carbamoyl phosphate</name>
        <dbReference type="ChEBI" id="CHEBI:58228"/>
    </ligand>
</feature>
<feature type="binding site" evidence="1">
    <location>
        <position position="281"/>
    </location>
    <ligand>
        <name>carbamoyl phosphate</name>
        <dbReference type="ChEBI" id="CHEBI:58228"/>
    </ligand>
</feature>
<reference key="1">
    <citation type="journal article" date="2009" name="Genome Biol.">
        <title>Genomic and genetic analyses of diversity and plant interactions of Pseudomonas fluorescens.</title>
        <authorList>
            <person name="Silby M.W."/>
            <person name="Cerdeno-Tarraga A.M."/>
            <person name="Vernikos G.S."/>
            <person name="Giddens S.R."/>
            <person name="Jackson R.W."/>
            <person name="Preston G.M."/>
            <person name="Zhang X.-X."/>
            <person name="Moon C.D."/>
            <person name="Gehrig S.M."/>
            <person name="Godfrey S.A.C."/>
            <person name="Knight C.G."/>
            <person name="Malone J.G."/>
            <person name="Robinson Z."/>
            <person name="Spiers A.J."/>
            <person name="Harris S."/>
            <person name="Challis G.L."/>
            <person name="Yaxley A.M."/>
            <person name="Harris D."/>
            <person name="Seeger K."/>
            <person name="Murphy L."/>
            <person name="Rutter S."/>
            <person name="Squares R."/>
            <person name="Quail M.A."/>
            <person name="Saunders E."/>
            <person name="Mavromatis K."/>
            <person name="Brettin T.S."/>
            <person name="Bentley S.D."/>
            <person name="Hothersall J."/>
            <person name="Stephens E."/>
            <person name="Thomas C.M."/>
            <person name="Parkhill J."/>
            <person name="Levy S.B."/>
            <person name="Rainey P.B."/>
            <person name="Thomson N.R."/>
        </authorList>
    </citation>
    <scope>NUCLEOTIDE SEQUENCE [LARGE SCALE GENOMIC DNA]</scope>
    <source>
        <strain>Pf0-1</strain>
    </source>
</reference>
<keyword id="KW-0665">Pyrimidine biosynthesis</keyword>
<keyword id="KW-0808">Transferase</keyword>
<comment type="function">
    <text evidence="1">Catalyzes the condensation of carbamoyl phosphate and aspartate to form carbamoyl aspartate and inorganic phosphate, the committed step in the de novo pyrimidine nucleotide biosynthesis pathway.</text>
</comment>
<comment type="catalytic activity">
    <reaction evidence="1">
        <text>carbamoyl phosphate + L-aspartate = N-carbamoyl-L-aspartate + phosphate + H(+)</text>
        <dbReference type="Rhea" id="RHEA:20013"/>
        <dbReference type="ChEBI" id="CHEBI:15378"/>
        <dbReference type="ChEBI" id="CHEBI:29991"/>
        <dbReference type="ChEBI" id="CHEBI:32814"/>
        <dbReference type="ChEBI" id="CHEBI:43474"/>
        <dbReference type="ChEBI" id="CHEBI:58228"/>
        <dbReference type="EC" id="2.1.3.2"/>
    </reaction>
</comment>
<comment type="pathway">
    <text evidence="1">Pyrimidine metabolism; UMP biosynthesis via de novo pathway; (S)-dihydroorotate from bicarbonate: step 2/3.</text>
</comment>
<comment type="subunit">
    <text evidence="1">Heterododecamer (2C3:3R2) of six catalytic PyrB chains organized as two trimers (C3), and six regulatory PyrI chains organized as three dimers (R2).</text>
</comment>
<comment type="similarity">
    <text evidence="1">Belongs to the aspartate/ornithine carbamoyltransferase superfamily. ATCase family.</text>
</comment>